<name>TRPA_BACP2</name>
<proteinExistence type="inferred from homology"/>
<accession>A8FEJ7</accession>
<organism>
    <name type="scientific">Bacillus pumilus (strain SAFR-032)</name>
    <dbReference type="NCBI Taxonomy" id="315750"/>
    <lineage>
        <taxon>Bacteria</taxon>
        <taxon>Bacillati</taxon>
        <taxon>Bacillota</taxon>
        <taxon>Bacilli</taxon>
        <taxon>Bacillales</taxon>
        <taxon>Bacillaceae</taxon>
        <taxon>Bacillus</taxon>
    </lineage>
</organism>
<evidence type="ECO:0000255" key="1">
    <source>
        <dbReference type="HAMAP-Rule" id="MF_00131"/>
    </source>
</evidence>
<gene>
    <name evidence="1" type="primary">trpA</name>
    <name type="ordered locus">BPUM_1994</name>
</gene>
<protein>
    <recommendedName>
        <fullName evidence="1">Tryptophan synthase alpha chain</fullName>
        <ecNumber evidence="1">4.2.1.20</ecNumber>
    </recommendedName>
</protein>
<keyword id="KW-0028">Amino-acid biosynthesis</keyword>
<keyword id="KW-0057">Aromatic amino acid biosynthesis</keyword>
<keyword id="KW-0456">Lyase</keyword>
<keyword id="KW-0822">Tryptophan biosynthesis</keyword>
<comment type="function">
    <text evidence="1">The alpha subunit is responsible for the aldol cleavage of indoleglycerol phosphate to indole and glyceraldehyde 3-phosphate.</text>
</comment>
<comment type="catalytic activity">
    <reaction evidence="1">
        <text>(1S,2R)-1-C-(indol-3-yl)glycerol 3-phosphate + L-serine = D-glyceraldehyde 3-phosphate + L-tryptophan + H2O</text>
        <dbReference type="Rhea" id="RHEA:10532"/>
        <dbReference type="ChEBI" id="CHEBI:15377"/>
        <dbReference type="ChEBI" id="CHEBI:33384"/>
        <dbReference type="ChEBI" id="CHEBI:57912"/>
        <dbReference type="ChEBI" id="CHEBI:58866"/>
        <dbReference type="ChEBI" id="CHEBI:59776"/>
        <dbReference type="EC" id="4.2.1.20"/>
    </reaction>
</comment>
<comment type="pathway">
    <text evidence="1">Amino-acid biosynthesis; L-tryptophan biosynthesis; L-tryptophan from chorismate: step 5/5.</text>
</comment>
<comment type="subunit">
    <text evidence="1">Tetramer of two alpha and two beta chains.</text>
</comment>
<comment type="similarity">
    <text evidence="1">Belongs to the TrpA family.</text>
</comment>
<reference key="1">
    <citation type="journal article" date="2007" name="PLoS ONE">
        <title>Paradoxical DNA repair and peroxide resistance gene conservation in Bacillus pumilus SAFR-032.</title>
        <authorList>
            <person name="Gioia J."/>
            <person name="Yerrapragada S."/>
            <person name="Qin X."/>
            <person name="Jiang H."/>
            <person name="Igboeli O.C."/>
            <person name="Muzny D."/>
            <person name="Dugan-Rocha S."/>
            <person name="Ding Y."/>
            <person name="Hawes A."/>
            <person name="Liu W."/>
            <person name="Perez L."/>
            <person name="Kovar C."/>
            <person name="Dinh H."/>
            <person name="Lee S."/>
            <person name="Nazareth L."/>
            <person name="Blyth P."/>
            <person name="Holder M."/>
            <person name="Buhay C."/>
            <person name="Tirumalai M.R."/>
            <person name="Liu Y."/>
            <person name="Dasgupta I."/>
            <person name="Bokhetache L."/>
            <person name="Fujita M."/>
            <person name="Karouia F."/>
            <person name="Eswara Moorthy P."/>
            <person name="Siefert J."/>
            <person name="Uzman A."/>
            <person name="Buzumbo P."/>
            <person name="Verma A."/>
            <person name="Zwiya H."/>
            <person name="McWilliams B.D."/>
            <person name="Olowu A."/>
            <person name="Clinkenbeard K.D."/>
            <person name="Newcombe D."/>
            <person name="Golebiewski L."/>
            <person name="Petrosino J.F."/>
            <person name="Nicholson W.L."/>
            <person name="Fox G.E."/>
            <person name="Venkateswaran K."/>
            <person name="Highlander S.K."/>
            <person name="Weinstock G.M."/>
        </authorList>
    </citation>
    <scope>NUCLEOTIDE SEQUENCE [LARGE SCALE GENOMIC DNA]</scope>
    <source>
        <strain>SAFR-032</strain>
    </source>
</reference>
<dbReference type="EC" id="4.2.1.20" evidence="1"/>
<dbReference type="EMBL" id="CP000813">
    <property type="protein sequence ID" value="ABV62664.1"/>
    <property type="molecule type" value="Genomic_DNA"/>
</dbReference>
<dbReference type="RefSeq" id="WP_012010375.1">
    <property type="nucleotide sequence ID" value="NC_009848.4"/>
</dbReference>
<dbReference type="SMR" id="A8FEJ7"/>
<dbReference type="STRING" id="315750.BPUM_1994"/>
<dbReference type="GeneID" id="5621260"/>
<dbReference type="KEGG" id="bpu:BPUM_1994"/>
<dbReference type="eggNOG" id="COG0159">
    <property type="taxonomic scope" value="Bacteria"/>
</dbReference>
<dbReference type="HOGENOM" id="CLU_016734_0_0_9"/>
<dbReference type="OrthoDB" id="9804578at2"/>
<dbReference type="UniPathway" id="UPA00035">
    <property type="reaction ID" value="UER00044"/>
</dbReference>
<dbReference type="Proteomes" id="UP000001355">
    <property type="component" value="Chromosome"/>
</dbReference>
<dbReference type="GO" id="GO:0005829">
    <property type="term" value="C:cytosol"/>
    <property type="evidence" value="ECO:0007669"/>
    <property type="project" value="TreeGrafter"/>
</dbReference>
<dbReference type="GO" id="GO:0004834">
    <property type="term" value="F:tryptophan synthase activity"/>
    <property type="evidence" value="ECO:0007669"/>
    <property type="project" value="UniProtKB-UniRule"/>
</dbReference>
<dbReference type="CDD" id="cd04724">
    <property type="entry name" value="Tryptophan_synthase_alpha"/>
    <property type="match status" value="1"/>
</dbReference>
<dbReference type="FunFam" id="3.20.20.70:FF:000037">
    <property type="entry name" value="Tryptophan synthase alpha chain"/>
    <property type="match status" value="1"/>
</dbReference>
<dbReference type="Gene3D" id="3.20.20.70">
    <property type="entry name" value="Aldolase class I"/>
    <property type="match status" value="1"/>
</dbReference>
<dbReference type="HAMAP" id="MF_00131">
    <property type="entry name" value="Trp_synth_alpha"/>
    <property type="match status" value="1"/>
</dbReference>
<dbReference type="InterPro" id="IPR013785">
    <property type="entry name" value="Aldolase_TIM"/>
</dbReference>
<dbReference type="InterPro" id="IPR011060">
    <property type="entry name" value="RibuloseP-bd_barrel"/>
</dbReference>
<dbReference type="InterPro" id="IPR018204">
    <property type="entry name" value="Trp_synthase_alpha_AS"/>
</dbReference>
<dbReference type="InterPro" id="IPR002028">
    <property type="entry name" value="Trp_synthase_suA"/>
</dbReference>
<dbReference type="NCBIfam" id="TIGR00262">
    <property type="entry name" value="trpA"/>
    <property type="match status" value="1"/>
</dbReference>
<dbReference type="PANTHER" id="PTHR43406:SF1">
    <property type="entry name" value="TRYPTOPHAN SYNTHASE ALPHA CHAIN, CHLOROPLASTIC"/>
    <property type="match status" value="1"/>
</dbReference>
<dbReference type="PANTHER" id="PTHR43406">
    <property type="entry name" value="TRYPTOPHAN SYNTHASE, ALPHA CHAIN"/>
    <property type="match status" value="1"/>
</dbReference>
<dbReference type="Pfam" id="PF00290">
    <property type="entry name" value="Trp_syntA"/>
    <property type="match status" value="1"/>
</dbReference>
<dbReference type="SUPFAM" id="SSF51366">
    <property type="entry name" value="Ribulose-phoshate binding barrel"/>
    <property type="match status" value="1"/>
</dbReference>
<dbReference type="PROSITE" id="PS00167">
    <property type="entry name" value="TRP_SYNTHASE_ALPHA"/>
    <property type="match status" value="1"/>
</dbReference>
<feature type="chain" id="PRO_1000057850" description="Tryptophan synthase alpha chain">
    <location>
        <begin position="1"/>
        <end position="267"/>
    </location>
</feature>
<feature type="active site" description="Proton acceptor" evidence="1">
    <location>
        <position position="43"/>
    </location>
</feature>
<feature type="active site" description="Proton acceptor" evidence="1">
    <location>
        <position position="54"/>
    </location>
</feature>
<sequence length="267" mass="29568">MITFQLEQGEKLFIPFMTAGDPSEEITIDLALSLQAAGAHAIELGVPYSDPLADGPVIQRASKRALNHGMNIVKAIELAGKMKKNGVKIPVILFTYYNPVLQLDTEYFFALLRKNHISGLLTPDLPFEESSELQKNCQSYDISYISLVAPTSKERLVNIVEQAEGFVYCVSSLGVTGVRQTFDESITDFIQQVKQLSHIPVAVGFGISTREQVDSMNKLSDGVVVGSALVKKIEELHDQLLASDTRQDALREFETYAKTFSPLYSFK</sequence>